<reference key="1">
    <citation type="journal article" date="2009" name="Nature">
        <title>Evolution of pathogenicity and sexual reproduction in eight Candida genomes.</title>
        <authorList>
            <person name="Butler G."/>
            <person name="Rasmussen M.D."/>
            <person name="Lin M.F."/>
            <person name="Santos M.A.S."/>
            <person name="Sakthikumar S."/>
            <person name="Munro C.A."/>
            <person name="Rheinbay E."/>
            <person name="Grabherr M."/>
            <person name="Forche A."/>
            <person name="Reedy J.L."/>
            <person name="Agrafioti I."/>
            <person name="Arnaud M.B."/>
            <person name="Bates S."/>
            <person name="Brown A.J.P."/>
            <person name="Brunke S."/>
            <person name="Costanzo M.C."/>
            <person name="Fitzpatrick D.A."/>
            <person name="de Groot P.W.J."/>
            <person name="Harris D."/>
            <person name="Hoyer L.L."/>
            <person name="Hube B."/>
            <person name="Klis F.M."/>
            <person name="Kodira C."/>
            <person name="Lennard N."/>
            <person name="Logue M.E."/>
            <person name="Martin R."/>
            <person name="Neiman A.M."/>
            <person name="Nikolaou E."/>
            <person name="Quail M.A."/>
            <person name="Quinn J."/>
            <person name="Santos M.C."/>
            <person name="Schmitzberger F.F."/>
            <person name="Sherlock G."/>
            <person name="Shah P."/>
            <person name="Silverstein K.A.T."/>
            <person name="Skrzypek M.S."/>
            <person name="Soll D."/>
            <person name="Staggs R."/>
            <person name="Stansfield I."/>
            <person name="Stumpf M.P.H."/>
            <person name="Sudbery P.E."/>
            <person name="Srikantha T."/>
            <person name="Zeng Q."/>
            <person name="Berman J."/>
            <person name="Berriman M."/>
            <person name="Heitman J."/>
            <person name="Gow N.A.R."/>
            <person name="Lorenz M.C."/>
            <person name="Birren B.W."/>
            <person name="Kellis M."/>
            <person name="Cuomo C.A."/>
        </authorList>
    </citation>
    <scope>NUCLEOTIDE SEQUENCE [LARGE SCALE GENOMIC DNA]</scope>
    <source>
        <strain>ATCC 11503 / BCRC 21390 / CBS 2605 / JCM 1781 / NBRC 1676 / NRRL YB-4239</strain>
    </source>
</reference>
<keyword id="KW-0963">Cytoplasm</keyword>
<keyword id="KW-0539">Nucleus</keyword>
<keyword id="KW-0653">Protein transport</keyword>
<keyword id="KW-1185">Reference proteome</keyword>
<keyword id="KW-0813">Transport</keyword>
<protein>
    <recommendedName>
        <fullName>Nascent polypeptide-associated complex subunit alpha</fullName>
        <shortName>NAC-alpha</shortName>
    </recommendedName>
    <alternativeName>
        <fullName>Alpha-NAC</fullName>
    </alternativeName>
</protein>
<dbReference type="EMBL" id="CH981525">
    <property type="protein sequence ID" value="EDK43915.1"/>
    <property type="molecule type" value="Genomic_DNA"/>
</dbReference>
<dbReference type="RefSeq" id="XP_001527265.1">
    <property type="nucleotide sequence ID" value="XM_001527215.1"/>
</dbReference>
<dbReference type="SMR" id="A5DXK7"/>
<dbReference type="FunCoup" id="A5DXK7">
    <property type="interactions" value="535"/>
</dbReference>
<dbReference type="STRING" id="379508.A5DXK7"/>
<dbReference type="GeneID" id="5234534"/>
<dbReference type="KEGG" id="lel:PVL30_002067"/>
<dbReference type="VEuPathDB" id="FungiDB:LELG_02094"/>
<dbReference type="eggNOG" id="KOG2239">
    <property type="taxonomic scope" value="Eukaryota"/>
</dbReference>
<dbReference type="HOGENOM" id="CLU_057806_2_1_1"/>
<dbReference type="InParanoid" id="A5DXK7"/>
<dbReference type="OMA" id="SQKMIFA"/>
<dbReference type="OrthoDB" id="3169036at2759"/>
<dbReference type="Proteomes" id="UP000001996">
    <property type="component" value="Unassembled WGS sequence"/>
</dbReference>
<dbReference type="GO" id="GO:0005854">
    <property type="term" value="C:nascent polypeptide-associated complex"/>
    <property type="evidence" value="ECO:0007669"/>
    <property type="project" value="EnsemblFungi"/>
</dbReference>
<dbReference type="GO" id="GO:0005634">
    <property type="term" value="C:nucleus"/>
    <property type="evidence" value="ECO:0007669"/>
    <property type="project" value="UniProtKB-SubCell"/>
</dbReference>
<dbReference type="GO" id="GO:0070300">
    <property type="term" value="F:phosphatidic acid binding"/>
    <property type="evidence" value="ECO:0007669"/>
    <property type="project" value="EnsemblFungi"/>
</dbReference>
<dbReference type="GO" id="GO:0080025">
    <property type="term" value="F:phosphatidylinositol-3,5-bisphosphate binding"/>
    <property type="evidence" value="ECO:0007669"/>
    <property type="project" value="EnsemblFungi"/>
</dbReference>
<dbReference type="GO" id="GO:0032266">
    <property type="term" value="F:phosphatidylinositol-3-phosphate binding"/>
    <property type="evidence" value="ECO:0007669"/>
    <property type="project" value="EnsemblFungi"/>
</dbReference>
<dbReference type="GO" id="GO:0070273">
    <property type="term" value="F:phosphatidylinositol-4-phosphate binding"/>
    <property type="evidence" value="ECO:0007669"/>
    <property type="project" value="EnsemblFungi"/>
</dbReference>
<dbReference type="GO" id="GO:0051082">
    <property type="term" value="F:unfolded protein binding"/>
    <property type="evidence" value="ECO:0007669"/>
    <property type="project" value="EnsemblFungi"/>
</dbReference>
<dbReference type="GO" id="GO:0006613">
    <property type="term" value="P:cotranslational protein targeting to membrane"/>
    <property type="evidence" value="ECO:0007669"/>
    <property type="project" value="EnsemblFungi"/>
</dbReference>
<dbReference type="GO" id="GO:0015031">
    <property type="term" value="P:protein transport"/>
    <property type="evidence" value="ECO:0007669"/>
    <property type="project" value="UniProtKB-KW"/>
</dbReference>
<dbReference type="CDD" id="cd22054">
    <property type="entry name" value="NAC_NACA"/>
    <property type="match status" value="1"/>
</dbReference>
<dbReference type="FunFam" id="2.20.70.30:FF:000002">
    <property type="entry name" value="Nascent polypeptide-associated complex (NAC), alpha subunit"/>
    <property type="match status" value="1"/>
</dbReference>
<dbReference type="Gene3D" id="1.10.8.10">
    <property type="entry name" value="DNA helicase RuvA subunit, C-terminal domain"/>
    <property type="match status" value="1"/>
</dbReference>
<dbReference type="Gene3D" id="2.20.70.30">
    <property type="entry name" value="Nascent polypeptide-associated complex domain"/>
    <property type="match status" value="1"/>
</dbReference>
<dbReference type="InterPro" id="IPR016641">
    <property type="entry name" value="EGD2/NACA0like"/>
</dbReference>
<dbReference type="InterPro" id="IPR044034">
    <property type="entry name" value="NAC-like_UBA"/>
</dbReference>
<dbReference type="InterPro" id="IPR038187">
    <property type="entry name" value="NAC_A/B_dom_sf"/>
</dbReference>
<dbReference type="InterPro" id="IPR002715">
    <property type="entry name" value="Nas_poly-pep-assoc_cplx_dom"/>
</dbReference>
<dbReference type="PANTHER" id="PTHR21713">
    <property type="entry name" value="NASCENT POLYPEPTIDE ASSOCIATED COMPLEX ALPHA SUBUNIT-RELATED"/>
    <property type="match status" value="1"/>
</dbReference>
<dbReference type="Pfam" id="PF01849">
    <property type="entry name" value="NAC"/>
    <property type="match status" value="1"/>
</dbReference>
<dbReference type="Pfam" id="PF19026">
    <property type="entry name" value="UBA_HYPK"/>
    <property type="match status" value="1"/>
</dbReference>
<dbReference type="PIRSF" id="PIRSF015901">
    <property type="entry name" value="NAC_alpha"/>
    <property type="match status" value="1"/>
</dbReference>
<dbReference type="SMART" id="SM01407">
    <property type="entry name" value="NAC"/>
    <property type="match status" value="1"/>
</dbReference>
<dbReference type="PROSITE" id="PS51151">
    <property type="entry name" value="NAC_AB"/>
    <property type="match status" value="1"/>
</dbReference>
<organism>
    <name type="scientific">Lodderomyces elongisporus (strain ATCC 11503 / CBS 2605 / JCM 1781 / NBRC 1676 / NRRL YB-4239)</name>
    <name type="common">Yeast</name>
    <name type="synonym">Saccharomyces elongisporus</name>
    <dbReference type="NCBI Taxonomy" id="379508"/>
    <lineage>
        <taxon>Eukaryota</taxon>
        <taxon>Fungi</taxon>
        <taxon>Dikarya</taxon>
        <taxon>Ascomycota</taxon>
        <taxon>Saccharomycotina</taxon>
        <taxon>Pichiomycetes</taxon>
        <taxon>Debaryomycetaceae</taxon>
        <taxon>Candida/Lodderomyces clade</taxon>
        <taxon>Lodderomyces</taxon>
    </lineage>
</organism>
<comment type="function">
    <text evidence="1">Component of the nascent polypeptide-associated complex (NAC), a dynamic component of the ribosomal exit tunnel, protecting the emerging polypeptides from interaction with other cytoplasmic proteins to ensure appropriate nascent protein targeting. The NAC complex also promotes mitochondrial protein import by enhancing productive ribosome interactions with the outer mitochondrial membrane and blocks the inappropriate interaction of ribosomes translating non-secretory nascent polypeptides with translocation sites in the membrane of the endoplasmic reticulum. EGD2 may also be involved in transcription regulation (By similarity).</text>
</comment>
<comment type="subunit">
    <text evidence="1">Part of the nascent polypeptide-associated complex (NAC), consisting of EGD2 and EGD1. NAC associates with ribosomes via EGD1 (By similarity).</text>
</comment>
<comment type="subcellular location">
    <subcellularLocation>
        <location evidence="1">Cytoplasm</location>
    </subcellularLocation>
    <subcellularLocation>
        <location evidence="1">Nucleus</location>
    </subcellularLocation>
    <text evidence="1">Predominantly cytoplasmic, may also transiently localize to the nucleus.</text>
</comment>
<comment type="similarity">
    <text evidence="4">Belongs to the NAC-alpha family.</text>
</comment>
<proteinExistence type="inferred from homology"/>
<sequence>MSIEEIPQGADVSIVPNKNEKKAKELIKKLGLKQIKGISRVTFKQRGNLIYAIDAPEVYRSQAGTYVVFGEAKVDDMNQRIAEAQAQQAQQEALQKAAADAGAAGDDKSPEAITADLEKASLQGGESNADAAEDDNEEVDETGINPKDIDLIVEQTRVSRGSAVKALKKHDGDMVNALMELS</sequence>
<feature type="chain" id="PRO_0000294526" description="Nascent polypeptide-associated complex subunit alpha">
    <location>
        <begin position="1"/>
        <end position="182"/>
    </location>
</feature>
<feature type="domain" description="NAC-A/B" evidence="2">
    <location>
        <begin position="17"/>
        <end position="81"/>
    </location>
</feature>
<feature type="domain" description="UBA">
    <location>
        <begin position="144"/>
        <end position="182"/>
    </location>
</feature>
<feature type="region of interest" description="Disordered" evidence="3">
    <location>
        <begin position="120"/>
        <end position="148"/>
    </location>
</feature>
<feature type="compositionally biased region" description="Acidic residues" evidence="3">
    <location>
        <begin position="131"/>
        <end position="141"/>
    </location>
</feature>
<evidence type="ECO:0000250" key="1"/>
<evidence type="ECO:0000255" key="2">
    <source>
        <dbReference type="PROSITE-ProRule" id="PRU00507"/>
    </source>
</evidence>
<evidence type="ECO:0000256" key="3">
    <source>
        <dbReference type="SAM" id="MobiDB-lite"/>
    </source>
</evidence>
<evidence type="ECO:0000305" key="4"/>
<accession>A5DXK7</accession>
<gene>
    <name type="primary">EGD2</name>
    <name type="ORF">LELG_02094</name>
</gene>
<name>NACA_LODEL</name>